<sequence>MIQQESRLKVADNTGAKEILCIRVLGGSSRRYAGIGDVIVATVKDAIPGGNVKRGDVVKAVVVRTVKERRRPDGSYIKFDENAAVIIKPDNDPRGTRIFGPVGRELREKRFMKIISLAPEVL</sequence>
<reference key="1">
    <citation type="journal article" date="2005" name="Proc. Natl. Acad. Sci. U.S.A.">
        <title>The complete genome sequence of Mycobacterium avium subspecies paratuberculosis.</title>
        <authorList>
            <person name="Li L."/>
            <person name="Bannantine J.P."/>
            <person name="Zhang Q."/>
            <person name="Amonsin A."/>
            <person name="May B.J."/>
            <person name="Alt D."/>
            <person name="Banerji N."/>
            <person name="Kanjilal S."/>
            <person name="Kapur V."/>
        </authorList>
    </citation>
    <scope>NUCLEOTIDE SEQUENCE [LARGE SCALE GENOMIC DNA]</scope>
    <source>
        <strain>ATCC BAA-968 / K-10</strain>
    </source>
</reference>
<feature type="chain" id="PRO_0000266507" description="Large ribosomal subunit protein uL14">
    <location>
        <begin position="1"/>
        <end position="122"/>
    </location>
</feature>
<accession>Q73S98</accession>
<keyword id="KW-1185">Reference proteome</keyword>
<keyword id="KW-0687">Ribonucleoprotein</keyword>
<keyword id="KW-0689">Ribosomal protein</keyword>
<keyword id="KW-0694">RNA-binding</keyword>
<keyword id="KW-0699">rRNA-binding</keyword>
<protein>
    <recommendedName>
        <fullName evidence="1">Large ribosomal subunit protein uL14</fullName>
    </recommendedName>
    <alternativeName>
        <fullName evidence="2">50S ribosomal protein L14</fullName>
    </alternativeName>
</protein>
<comment type="function">
    <text evidence="1">Binds to 23S rRNA. Forms part of two intersubunit bridges in the 70S ribosome.</text>
</comment>
<comment type="subunit">
    <text evidence="1">Part of the 50S ribosomal subunit. Forms a cluster with proteins L3 and L19. In the 70S ribosome, L14 and L19 interact and together make contacts with the 16S rRNA in bridges B5 and B8.</text>
</comment>
<comment type="similarity">
    <text evidence="1">Belongs to the universal ribosomal protein uL14 family.</text>
</comment>
<gene>
    <name evidence="1" type="primary">rplN</name>
    <name type="ordered locus">MAP_4177</name>
</gene>
<proteinExistence type="inferred from homology"/>
<organism>
    <name type="scientific">Mycolicibacterium paratuberculosis (strain ATCC BAA-968 / K-10)</name>
    <name type="common">Mycobacterium paratuberculosis</name>
    <dbReference type="NCBI Taxonomy" id="262316"/>
    <lineage>
        <taxon>Bacteria</taxon>
        <taxon>Bacillati</taxon>
        <taxon>Actinomycetota</taxon>
        <taxon>Actinomycetes</taxon>
        <taxon>Mycobacteriales</taxon>
        <taxon>Mycobacteriaceae</taxon>
        <taxon>Mycobacterium</taxon>
        <taxon>Mycobacterium avium complex (MAC)</taxon>
    </lineage>
</organism>
<evidence type="ECO:0000255" key="1">
    <source>
        <dbReference type="HAMAP-Rule" id="MF_01367"/>
    </source>
</evidence>
<evidence type="ECO:0000305" key="2"/>
<name>RL14_MYCPA</name>
<dbReference type="EMBL" id="AE016958">
    <property type="protein sequence ID" value="AAS06727.1"/>
    <property type="molecule type" value="Genomic_DNA"/>
</dbReference>
<dbReference type="RefSeq" id="WP_003403649.1">
    <property type="nucleotide sequence ID" value="NZ_CP106873.1"/>
</dbReference>
<dbReference type="SMR" id="Q73S98"/>
<dbReference type="STRING" id="262316.MAP_4177"/>
<dbReference type="GeneID" id="93493169"/>
<dbReference type="KEGG" id="mpa:MAP_4177"/>
<dbReference type="eggNOG" id="COG0093">
    <property type="taxonomic scope" value="Bacteria"/>
</dbReference>
<dbReference type="HOGENOM" id="CLU_095071_2_1_11"/>
<dbReference type="Proteomes" id="UP000000580">
    <property type="component" value="Chromosome"/>
</dbReference>
<dbReference type="GO" id="GO:0022625">
    <property type="term" value="C:cytosolic large ribosomal subunit"/>
    <property type="evidence" value="ECO:0007669"/>
    <property type="project" value="TreeGrafter"/>
</dbReference>
<dbReference type="GO" id="GO:0070180">
    <property type="term" value="F:large ribosomal subunit rRNA binding"/>
    <property type="evidence" value="ECO:0007669"/>
    <property type="project" value="TreeGrafter"/>
</dbReference>
<dbReference type="GO" id="GO:0003735">
    <property type="term" value="F:structural constituent of ribosome"/>
    <property type="evidence" value="ECO:0007669"/>
    <property type="project" value="InterPro"/>
</dbReference>
<dbReference type="GO" id="GO:0006412">
    <property type="term" value="P:translation"/>
    <property type="evidence" value="ECO:0007669"/>
    <property type="project" value="UniProtKB-UniRule"/>
</dbReference>
<dbReference type="CDD" id="cd00337">
    <property type="entry name" value="Ribosomal_uL14"/>
    <property type="match status" value="1"/>
</dbReference>
<dbReference type="FunFam" id="2.40.150.20:FF:000001">
    <property type="entry name" value="50S ribosomal protein L14"/>
    <property type="match status" value="1"/>
</dbReference>
<dbReference type="Gene3D" id="2.40.150.20">
    <property type="entry name" value="Ribosomal protein L14"/>
    <property type="match status" value="1"/>
</dbReference>
<dbReference type="HAMAP" id="MF_01367">
    <property type="entry name" value="Ribosomal_uL14"/>
    <property type="match status" value="1"/>
</dbReference>
<dbReference type="InterPro" id="IPR000218">
    <property type="entry name" value="Ribosomal_uL14"/>
</dbReference>
<dbReference type="InterPro" id="IPR005745">
    <property type="entry name" value="Ribosomal_uL14_bac-type"/>
</dbReference>
<dbReference type="InterPro" id="IPR019972">
    <property type="entry name" value="Ribosomal_uL14_CS"/>
</dbReference>
<dbReference type="InterPro" id="IPR036853">
    <property type="entry name" value="Ribosomal_uL14_sf"/>
</dbReference>
<dbReference type="NCBIfam" id="TIGR01067">
    <property type="entry name" value="rplN_bact"/>
    <property type="match status" value="1"/>
</dbReference>
<dbReference type="PANTHER" id="PTHR11761">
    <property type="entry name" value="50S/60S RIBOSOMAL PROTEIN L14/L23"/>
    <property type="match status" value="1"/>
</dbReference>
<dbReference type="PANTHER" id="PTHR11761:SF3">
    <property type="entry name" value="LARGE RIBOSOMAL SUBUNIT PROTEIN UL14M"/>
    <property type="match status" value="1"/>
</dbReference>
<dbReference type="Pfam" id="PF00238">
    <property type="entry name" value="Ribosomal_L14"/>
    <property type="match status" value="1"/>
</dbReference>
<dbReference type="SMART" id="SM01374">
    <property type="entry name" value="Ribosomal_L14"/>
    <property type="match status" value="1"/>
</dbReference>
<dbReference type="SUPFAM" id="SSF50193">
    <property type="entry name" value="Ribosomal protein L14"/>
    <property type="match status" value="1"/>
</dbReference>
<dbReference type="PROSITE" id="PS00049">
    <property type="entry name" value="RIBOSOMAL_L14"/>
    <property type="match status" value="1"/>
</dbReference>